<evidence type="ECO:0000255" key="1"/>
<evidence type="ECO:0000256" key="2">
    <source>
        <dbReference type="SAM" id="MobiDB-lite"/>
    </source>
</evidence>
<evidence type="ECO:0000269" key="3">
    <source>
    </source>
</evidence>
<evidence type="ECO:0000269" key="4">
    <source>
    </source>
</evidence>
<evidence type="ECO:0000269" key="5">
    <source>
    </source>
</evidence>
<evidence type="ECO:0000269" key="6">
    <source>
    </source>
</evidence>
<evidence type="ECO:0000269" key="7">
    <source>
    </source>
</evidence>
<evidence type="ECO:0000269" key="8">
    <source>
    </source>
</evidence>
<evidence type="ECO:0000303" key="9">
    <source>
    </source>
</evidence>
<evidence type="ECO:0000303" key="10">
    <source>
    </source>
</evidence>
<evidence type="ECO:0000303" key="11">
    <source>
    </source>
</evidence>
<evidence type="ECO:0000305" key="12"/>
<evidence type="ECO:0000312" key="13">
    <source>
        <dbReference type="EMBL" id="AAL39827.1"/>
    </source>
</evidence>
<evidence type="ECO:0000312" key="14">
    <source>
        <dbReference type="EMBL" id="AAO23023.1"/>
    </source>
</evidence>
<evidence type="ECO:0000312" key="15">
    <source>
        <dbReference type="EMBL" id="AAX52724.1"/>
    </source>
</evidence>
<evidence type="ECO:0000312" key="16">
    <source>
        <dbReference type="FlyBase" id="FBgn0020279"/>
    </source>
</evidence>
<gene>
    <name evidence="14 16" type="primary">lig</name>
    <name type="ORF">CG8715</name>
</gene>
<accession>Q86S05</accession>
<accession>A1Z794</accession>
<accession>Q86S06</accession>
<accession>Q8SZZ7</accession>
<feature type="chain" id="PRO_0000314621" description="Protein lingerer">
    <location>
        <begin position="1"/>
        <end position="1375"/>
    </location>
</feature>
<feature type="domain" description="UBA" evidence="1">
    <location>
        <begin position="84"/>
        <end position="124"/>
    </location>
</feature>
<feature type="region of interest" description="Disordered" evidence="2">
    <location>
        <begin position="1"/>
        <end position="69"/>
    </location>
</feature>
<feature type="region of interest" description="Disordered" evidence="2">
    <location>
        <begin position="142"/>
        <end position="286"/>
    </location>
</feature>
<feature type="region of interest" description="Disordered" evidence="2">
    <location>
        <begin position="374"/>
        <end position="453"/>
    </location>
</feature>
<feature type="region of interest" description="Disordered" evidence="2">
    <location>
        <begin position="613"/>
        <end position="646"/>
    </location>
</feature>
<feature type="region of interest" description="Disordered" evidence="2">
    <location>
        <begin position="750"/>
        <end position="801"/>
    </location>
</feature>
<feature type="region of interest" description="Disordered" evidence="2">
    <location>
        <begin position="869"/>
        <end position="894"/>
    </location>
</feature>
<feature type="region of interest" description="Disordered" evidence="2">
    <location>
        <begin position="987"/>
        <end position="1036"/>
    </location>
</feature>
<feature type="region of interest" description="Disordered" evidence="2">
    <location>
        <begin position="1203"/>
        <end position="1234"/>
    </location>
</feature>
<feature type="region of interest" description="Disordered" evidence="2">
    <location>
        <begin position="1251"/>
        <end position="1277"/>
    </location>
</feature>
<feature type="compositionally biased region" description="Basic and acidic residues" evidence="2">
    <location>
        <begin position="53"/>
        <end position="62"/>
    </location>
</feature>
<feature type="compositionally biased region" description="Low complexity" evidence="2">
    <location>
        <begin position="142"/>
        <end position="161"/>
    </location>
</feature>
<feature type="compositionally biased region" description="Low complexity" evidence="2">
    <location>
        <begin position="173"/>
        <end position="184"/>
    </location>
</feature>
<feature type="compositionally biased region" description="Basic and acidic residues" evidence="2">
    <location>
        <begin position="185"/>
        <end position="204"/>
    </location>
</feature>
<feature type="compositionally biased region" description="Gly residues" evidence="2">
    <location>
        <begin position="228"/>
        <end position="282"/>
    </location>
</feature>
<feature type="compositionally biased region" description="Polar residues" evidence="2">
    <location>
        <begin position="374"/>
        <end position="387"/>
    </location>
</feature>
<feature type="compositionally biased region" description="Polar residues" evidence="2">
    <location>
        <begin position="395"/>
        <end position="412"/>
    </location>
</feature>
<feature type="compositionally biased region" description="Gly residues" evidence="2">
    <location>
        <begin position="426"/>
        <end position="441"/>
    </location>
</feature>
<feature type="compositionally biased region" description="Low complexity" evidence="2">
    <location>
        <begin position="442"/>
        <end position="453"/>
    </location>
</feature>
<feature type="compositionally biased region" description="Low complexity" evidence="2">
    <location>
        <begin position="629"/>
        <end position="646"/>
    </location>
</feature>
<feature type="compositionally biased region" description="Low complexity" evidence="2">
    <location>
        <begin position="750"/>
        <end position="767"/>
    </location>
</feature>
<feature type="compositionally biased region" description="Gly residues" evidence="2">
    <location>
        <begin position="768"/>
        <end position="781"/>
    </location>
</feature>
<feature type="compositionally biased region" description="Low complexity" evidence="2">
    <location>
        <begin position="789"/>
        <end position="801"/>
    </location>
</feature>
<feature type="compositionally biased region" description="Low complexity" evidence="2">
    <location>
        <begin position="869"/>
        <end position="882"/>
    </location>
</feature>
<feature type="compositionally biased region" description="Low complexity" evidence="2">
    <location>
        <begin position="987"/>
        <end position="1008"/>
    </location>
</feature>
<feature type="compositionally biased region" description="Gly residues" evidence="2">
    <location>
        <begin position="1009"/>
        <end position="1036"/>
    </location>
</feature>
<feature type="compositionally biased region" description="Polar residues" evidence="2">
    <location>
        <begin position="1265"/>
        <end position="1277"/>
    </location>
</feature>
<feature type="modified residue" description="Phosphotyrosine" evidence="8">
    <location>
        <position position="321"/>
    </location>
</feature>
<feature type="modified residue" description="Phosphoserine" evidence="8">
    <location>
        <position position="324"/>
    </location>
</feature>
<feature type="modified residue" description="Phosphoserine" evidence="7">
    <location>
        <position position="672"/>
    </location>
</feature>
<feature type="modified residue" description="Phosphothreonine" evidence="7">
    <location>
        <position position="673"/>
    </location>
</feature>
<feature type="modified residue" description="Phosphoserine" evidence="7">
    <location>
        <position position="674"/>
    </location>
</feature>
<feature type="splice variant" id="VSP_052633" description="In isoform A." evidence="9">
    <original>VHSELPLQVVVGGGTESHVLIHGNVNGPQVTYHRIWQTEPVQCQNQLVAAHCNNFEPNIDCCVHDNNNDLSFFAD</original>
    <variation>MDGRIHSSSRRDSNSAGQRQQSTSQSKSAGKQGYSPSYWAGQN</variation>
    <location>
        <begin position="1301"/>
        <end position="1375"/>
    </location>
</feature>
<feature type="splice variant" id="VSP_052634" description="In isoform B." evidence="10 11">
    <original>VHSELPLQVVVGGGTESHVLIHGNVNGPQVTYHRIWQTEPVQCQNQLVAAHCNNFEPNIDCCVHDNNNDLSFFAD</original>
    <variation>DSNSAGQRQQSTSQSKSAGKQGYSPSYWAGQN</variation>
    <location>
        <begin position="1301"/>
        <end position="1375"/>
    </location>
</feature>
<feature type="sequence conflict" description="In Ref. 1; AAO23022." evidence="12" ref="1">
    <original>R</original>
    <variation>C</variation>
    <location>
        <position position="185"/>
    </location>
</feature>
<proteinExistence type="evidence at protein level"/>
<dbReference type="EMBL" id="AF276963">
    <property type="protein sequence ID" value="AAO23022.1"/>
    <property type="molecule type" value="mRNA"/>
</dbReference>
<dbReference type="EMBL" id="AF276964">
    <property type="protein sequence ID" value="AAO23023.1"/>
    <property type="molecule type" value="mRNA"/>
</dbReference>
<dbReference type="EMBL" id="AE013599">
    <property type="protein sequence ID" value="AAF59144.3"/>
    <property type="molecule type" value="Genomic_DNA"/>
</dbReference>
<dbReference type="EMBL" id="AE013599">
    <property type="protein sequence ID" value="AAM68848.2"/>
    <property type="molecule type" value="Genomic_DNA"/>
</dbReference>
<dbReference type="EMBL" id="AE013599">
    <property type="protein sequence ID" value="AAS64895.2"/>
    <property type="molecule type" value="Genomic_DNA"/>
</dbReference>
<dbReference type="EMBL" id="AE013599">
    <property type="protein sequence ID" value="AAX52724.1"/>
    <property type="molecule type" value="Genomic_DNA"/>
</dbReference>
<dbReference type="EMBL" id="AY069682">
    <property type="protein sequence ID" value="AAL39827.1"/>
    <property type="molecule type" value="mRNA"/>
</dbReference>
<dbReference type="RefSeq" id="NP_001014503.1">
    <molecule id="Q86S05-1"/>
    <property type="nucleotide sequence ID" value="NM_001014503.2"/>
</dbReference>
<dbReference type="RefSeq" id="NP_001163081.1">
    <molecule id="Q86S05-3"/>
    <property type="nucleotide sequence ID" value="NM_001169610.2"/>
</dbReference>
<dbReference type="RefSeq" id="NP_001163082.1">
    <molecule id="Q86S05-3"/>
    <property type="nucleotide sequence ID" value="NM_001169611.1"/>
</dbReference>
<dbReference type="RefSeq" id="NP_001163083.1">
    <molecule id="Q86S05-3"/>
    <property type="nucleotide sequence ID" value="NM_001169612.2"/>
</dbReference>
<dbReference type="RefSeq" id="NP_610348.3">
    <molecule id="Q86S05-2"/>
    <property type="nucleotide sequence ID" value="NM_136504.5"/>
</dbReference>
<dbReference type="RefSeq" id="NP_724643.2">
    <molecule id="Q86S05-3"/>
    <property type="nucleotide sequence ID" value="NM_165586.5"/>
</dbReference>
<dbReference type="RefSeq" id="NP_995778.2">
    <molecule id="Q86S05-2"/>
    <property type="nucleotide sequence ID" value="NM_206056.5"/>
</dbReference>
<dbReference type="SMR" id="Q86S05"/>
<dbReference type="BioGRID" id="61631">
    <property type="interactions" value="26"/>
</dbReference>
<dbReference type="FunCoup" id="Q86S05">
    <property type="interactions" value="2221"/>
</dbReference>
<dbReference type="IntAct" id="Q86S05">
    <property type="interactions" value="2"/>
</dbReference>
<dbReference type="MINT" id="Q86S05"/>
<dbReference type="STRING" id="7227.FBpp0303481"/>
<dbReference type="GlyGen" id="Q86S05">
    <property type="glycosylation" value="3 sites, 1 O-linked glycan (1 site)"/>
</dbReference>
<dbReference type="iPTMnet" id="Q86S05"/>
<dbReference type="PaxDb" id="7227-FBpp0100030"/>
<dbReference type="DNASU" id="35771"/>
<dbReference type="EnsemblMetazoa" id="FBtr0088774">
    <molecule id="Q86S05-2"/>
    <property type="protein sequence ID" value="FBpp0087852"/>
    <property type="gene ID" value="FBgn0020279"/>
</dbReference>
<dbReference type="EnsemblMetazoa" id="FBtr0088775">
    <molecule id="Q86S05-3"/>
    <property type="protein sequence ID" value="FBpp0087853"/>
    <property type="gene ID" value="FBgn0020279"/>
</dbReference>
<dbReference type="EnsemblMetazoa" id="FBtr0088776">
    <molecule id="Q86S05-2"/>
    <property type="protein sequence ID" value="FBpp0087854"/>
    <property type="gene ID" value="FBgn0020279"/>
</dbReference>
<dbReference type="EnsemblMetazoa" id="FBtr0100575">
    <molecule id="Q86S05-1"/>
    <property type="protein sequence ID" value="FBpp0100030"/>
    <property type="gene ID" value="FBgn0020279"/>
</dbReference>
<dbReference type="EnsemblMetazoa" id="FBtr0301915">
    <molecule id="Q86S05-3"/>
    <property type="protein sequence ID" value="FBpp0291129"/>
    <property type="gene ID" value="FBgn0020279"/>
</dbReference>
<dbReference type="EnsemblMetazoa" id="FBtr0301916">
    <molecule id="Q86S05-3"/>
    <property type="protein sequence ID" value="FBpp0291130"/>
    <property type="gene ID" value="FBgn0020279"/>
</dbReference>
<dbReference type="EnsemblMetazoa" id="FBtr0301917">
    <molecule id="Q86S05-3"/>
    <property type="protein sequence ID" value="FBpp0291131"/>
    <property type="gene ID" value="FBgn0020279"/>
</dbReference>
<dbReference type="GeneID" id="35771"/>
<dbReference type="KEGG" id="dme:Dmel_CG8715"/>
<dbReference type="AGR" id="FB:FBgn0020279"/>
<dbReference type="CTD" id="35771"/>
<dbReference type="FlyBase" id="FBgn0020279">
    <property type="gene designation" value="lig"/>
</dbReference>
<dbReference type="VEuPathDB" id="VectorBase:FBgn0020279"/>
<dbReference type="eggNOG" id="ENOG502QPRH">
    <property type="taxonomic scope" value="Eukaryota"/>
</dbReference>
<dbReference type="GeneTree" id="ENSGT00390000003453"/>
<dbReference type="InParanoid" id="Q86S05"/>
<dbReference type="OMA" id="DRVQPQT"/>
<dbReference type="OrthoDB" id="5918007at2759"/>
<dbReference type="PhylomeDB" id="Q86S05"/>
<dbReference type="SignaLink" id="Q86S05"/>
<dbReference type="BioGRID-ORCS" id="35771">
    <property type="hits" value="0 hits in 3 CRISPR screens"/>
</dbReference>
<dbReference type="ChiTaRS" id="lig">
    <property type="organism name" value="fly"/>
</dbReference>
<dbReference type="GenomeRNAi" id="35771"/>
<dbReference type="PRO" id="PR:Q86S05"/>
<dbReference type="Proteomes" id="UP000000803">
    <property type="component" value="Chromosome 2R"/>
</dbReference>
<dbReference type="Bgee" id="FBgn0020279">
    <property type="expression patterns" value="Expressed in adult class III enteroendocrine cell in adult midgut (Drosophila) and 231 other cell types or tissues"/>
</dbReference>
<dbReference type="ExpressionAtlas" id="Q86S05">
    <property type="expression patterns" value="baseline and differential"/>
</dbReference>
<dbReference type="GO" id="GO:0005737">
    <property type="term" value="C:cytoplasm"/>
    <property type="evidence" value="ECO:0000314"/>
    <property type="project" value="UniProtKB"/>
</dbReference>
<dbReference type="GO" id="GO:0005634">
    <property type="term" value="C:nucleus"/>
    <property type="evidence" value="ECO:0000318"/>
    <property type="project" value="GO_Central"/>
</dbReference>
<dbReference type="GO" id="GO:0000932">
    <property type="term" value="C:P-body"/>
    <property type="evidence" value="ECO:0000314"/>
    <property type="project" value="FlyBase"/>
</dbReference>
<dbReference type="GO" id="GO:0007620">
    <property type="term" value="P:copulation"/>
    <property type="evidence" value="ECO:0000315"/>
    <property type="project" value="FlyBase"/>
</dbReference>
<dbReference type="GO" id="GO:0008069">
    <property type="term" value="P:dorsal/ventral axis specification, ovarian follicular epithelium"/>
    <property type="evidence" value="ECO:0000316"/>
    <property type="project" value="FlyBase"/>
</dbReference>
<dbReference type="GO" id="GO:0060179">
    <property type="term" value="P:male mating behavior"/>
    <property type="evidence" value="ECO:0000315"/>
    <property type="project" value="FlyBase"/>
</dbReference>
<dbReference type="GO" id="GO:0045571">
    <property type="term" value="P:negative regulation of imaginal disc growth"/>
    <property type="evidence" value="ECO:0000316"/>
    <property type="project" value="FlyBase"/>
</dbReference>
<dbReference type="GO" id="GO:0046426">
    <property type="term" value="P:negative regulation of receptor signaling pathway via JAK-STAT"/>
    <property type="evidence" value="ECO:0000315"/>
    <property type="project" value="FlyBase"/>
</dbReference>
<dbReference type="GO" id="GO:0035332">
    <property type="term" value="P:positive regulation of hippo signaling"/>
    <property type="evidence" value="ECO:0000315"/>
    <property type="project" value="FlyBase"/>
</dbReference>
<dbReference type="GO" id="GO:0010468">
    <property type="term" value="P:regulation of gene expression"/>
    <property type="evidence" value="ECO:0000315"/>
    <property type="project" value="FlyBase"/>
</dbReference>
<dbReference type="CDD" id="cd14277">
    <property type="entry name" value="UBA_UBP2_like"/>
    <property type="match status" value="1"/>
</dbReference>
<dbReference type="FunFam" id="1.10.8.10:FF:000059">
    <property type="entry name" value="Lingerer, isoform I"/>
    <property type="match status" value="1"/>
</dbReference>
<dbReference type="Gene3D" id="1.10.8.10">
    <property type="entry name" value="DNA helicase RuvA subunit, C-terminal domain"/>
    <property type="match status" value="1"/>
</dbReference>
<dbReference type="InterPro" id="IPR051833">
    <property type="entry name" value="TC-DDR_regulator"/>
</dbReference>
<dbReference type="InterPro" id="IPR009060">
    <property type="entry name" value="UBA-like_sf"/>
</dbReference>
<dbReference type="InterPro" id="IPR022166">
    <property type="entry name" value="UBAP2/Lig"/>
</dbReference>
<dbReference type="PANTHER" id="PTHR16308:SF13">
    <property type="entry name" value="PROTEIN LINGERER"/>
    <property type="match status" value="1"/>
</dbReference>
<dbReference type="PANTHER" id="PTHR16308">
    <property type="entry name" value="UBIQUITIN ASSOCIATED PROTEIN 2-LIKE/LINGERER"/>
    <property type="match status" value="1"/>
</dbReference>
<dbReference type="Pfam" id="PF12478">
    <property type="entry name" value="UBAP2-Lig"/>
    <property type="match status" value="1"/>
</dbReference>
<dbReference type="SUPFAM" id="SSF46934">
    <property type="entry name" value="UBA-like"/>
    <property type="match status" value="1"/>
</dbReference>
<reference evidence="12 14" key="1">
    <citation type="journal article" date="2002" name="Genetics">
        <title>Lingerer, a Drosophila gene involved in initiation and termination of copulation, encodes a set of novel cytoplasmic proteins.</title>
        <authorList>
            <person name="Kuniyoshi H."/>
            <person name="Baba K."/>
            <person name="Ueda R."/>
            <person name="Kondo S."/>
            <person name="Awano W."/>
            <person name="Juni N."/>
            <person name="Yamamoto D."/>
        </authorList>
    </citation>
    <scope>NUCLEOTIDE SEQUENCE [MRNA] (ISOFORMS B AND D)</scope>
    <scope>FUNCTION</scope>
    <scope>SUBCELLULAR LOCATION</scope>
    <scope>TISSUE SPECIFICITY</scope>
    <scope>DISRUPTION PHENOTYPE</scope>
    <scope>DEVELOPMENTAL STAGE</scope>
</reference>
<reference evidence="15" key="2">
    <citation type="journal article" date="2000" name="Science">
        <title>The genome sequence of Drosophila melanogaster.</title>
        <authorList>
            <person name="Adams M.D."/>
            <person name="Celniker S.E."/>
            <person name="Holt R.A."/>
            <person name="Evans C.A."/>
            <person name="Gocayne J.D."/>
            <person name="Amanatides P.G."/>
            <person name="Scherer S.E."/>
            <person name="Li P.W."/>
            <person name="Hoskins R.A."/>
            <person name="Galle R.F."/>
            <person name="George R.A."/>
            <person name="Lewis S.E."/>
            <person name="Richards S."/>
            <person name="Ashburner M."/>
            <person name="Henderson S.N."/>
            <person name="Sutton G.G."/>
            <person name="Wortman J.R."/>
            <person name="Yandell M.D."/>
            <person name="Zhang Q."/>
            <person name="Chen L.X."/>
            <person name="Brandon R.C."/>
            <person name="Rogers Y.-H.C."/>
            <person name="Blazej R.G."/>
            <person name="Champe M."/>
            <person name="Pfeiffer B.D."/>
            <person name="Wan K.H."/>
            <person name="Doyle C."/>
            <person name="Baxter E.G."/>
            <person name="Helt G."/>
            <person name="Nelson C.R."/>
            <person name="Miklos G.L.G."/>
            <person name="Abril J.F."/>
            <person name="Agbayani A."/>
            <person name="An H.-J."/>
            <person name="Andrews-Pfannkoch C."/>
            <person name="Baldwin D."/>
            <person name="Ballew R.M."/>
            <person name="Basu A."/>
            <person name="Baxendale J."/>
            <person name="Bayraktaroglu L."/>
            <person name="Beasley E.M."/>
            <person name="Beeson K.Y."/>
            <person name="Benos P.V."/>
            <person name="Berman B.P."/>
            <person name="Bhandari D."/>
            <person name="Bolshakov S."/>
            <person name="Borkova D."/>
            <person name="Botchan M.R."/>
            <person name="Bouck J."/>
            <person name="Brokstein P."/>
            <person name="Brottier P."/>
            <person name="Burtis K.C."/>
            <person name="Busam D.A."/>
            <person name="Butler H."/>
            <person name="Cadieu E."/>
            <person name="Center A."/>
            <person name="Chandra I."/>
            <person name="Cherry J.M."/>
            <person name="Cawley S."/>
            <person name="Dahlke C."/>
            <person name="Davenport L.B."/>
            <person name="Davies P."/>
            <person name="de Pablos B."/>
            <person name="Delcher A."/>
            <person name="Deng Z."/>
            <person name="Mays A.D."/>
            <person name="Dew I."/>
            <person name="Dietz S.M."/>
            <person name="Dodson K."/>
            <person name="Doup L.E."/>
            <person name="Downes M."/>
            <person name="Dugan-Rocha S."/>
            <person name="Dunkov B.C."/>
            <person name="Dunn P."/>
            <person name="Durbin K.J."/>
            <person name="Evangelista C.C."/>
            <person name="Ferraz C."/>
            <person name="Ferriera S."/>
            <person name="Fleischmann W."/>
            <person name="Fosler C."/>
            <person name="Gabrielian A.E."/>
            <person name="Garg N.S."/>
            <person name="Gelbart W.M."/>
            <person name="Glasser K."/>
            <person name="Glodek A."/>
            <person name="Gong F."/>
            <person name="Gorrell J.H."/>
            <person name="Gu Z."/>
            <person name="Guan P."/>
            <person name="Harris M."/>
            <person name="Harris N.L."/>
            <person name="Harvey D.A."/>
            <person name="Heiman T.J."/>
            <person name="Hernandez J.R."/>
            <person name="Houck J."/>
            <person name="Hostin D."/>
            <person name="Houston K.A."/>
            <person name="Howland T.J."/>
            <person name="Wei M.-H."/>
            <person name="Ibegwam C."/>
            <person name="Jalali M."/>
            <person name="Kalush F."/>
            <person name="Karpen G.H."/>
            <person name="Ke Z."/>
            <person name="Kennison J.A."/>
            <person name="Ketchum K.A."/>
            <person name="Kimmel B.E."/>
            <person name="Kodira C.D."/>
            <person name="Kraft C.L."/>
            <person name="Kravitz S."/>
            <person name="Kulp D."/>
            <person name="Lai Z."/>
            <person name="Lasko P."/>
            <person name="Lei Y."/>
            <person name="Levitsky A.A."/>
            <person name="Li J.H."/>
            <person name="Li Z."/>
            <person name="Liang Y."/>
            <person name="Lin X."/>
            <person name="Liu X."/>
            <person name="Mattei B."/>
            <person name="McIntosh T.C."/>
            <person name="McLeod M.P."/>
            <person name="McPherson D."/>
            <person name="Merkulov G."/>
            <person name="Milshina N.V."/>
            <person name="Mobarry C."/>
            <person name="Morris J."/>
            <person name="Moshrefi A."/>
            <person name="Mount S.M."/>
            <person name="Moy M."/>
            <person name="Murphy B."/>
            <person name="Murphy L."/>
            <person name="Muzny D.M."/>
            <person name="Nelson D.L."/>
            <person name="Nelson D.R."/>
            <person name="Nelson K.A."/>
            <person name="Nixon K."/>
            <person name="Nusskern D.R."/>
            <person name="Pacleb J.M."/>
            <person name="Palazzolo M."/>
            <person name="Pittman G.S."/>
            <person name="Pan S."/>
            <person name="Pollard J."/>
            <person name="Puri V."/>
            <person name="Reese M.G."/>
            <person name="Reinert K."/>
            <person name="Remington K."/>
            <person name="Saunders R.D.C."/>
            <person name="Scheeler F."/>
            <person name="Shen H."/>
            <person name="Shue B.C."/>
            <person name="Siden-Kiamos I."/>
            <person name="Simpson M."/>
            <person name="Skupski M.P."/>
            <person name="Smith T.J."/>
            <person name="Spier E."/>
            <person name="Spradling A.C."/>
            <person name="Stapleton M."/>
            <person name="Strong R."/>
            <person name="Sun E."/>
            <person name="Svirskas R."/>
            <person name="Tector C."/>
            <person name="Turner R."/>
            <person name="Venter E."/>
            <person name="Wang A.H."/>
            <person name="Wang X."/>
            <person name="Wang Z.-Y."/>
            <person name="Wassarman D.A."/>
            <person name="Weinstock G.M."/>
            <person name="Weissenbach J."/>
            <person name="Williams S.M."/>
            <person name="Woodage T."/>
            <person name="Worley K.C."/>
            <person name="Wu D."/>
            <person name="Yang S."/>
            <person name="Yao Q.A."/>
            <person name="Ye J."/>
            <person name="Yeh R.-F."/>
            <person name="Zaveri J.S."/>
            <person name="Zhan M."/>
            <person name="Zhang G."/>
            <person name="Zhao Q."/>
            <person name="Zheng L."/>
            <person name="Zheng X.H."/>
            <person name="Zhong F.N."/>
            <person name="Zhong W."/>
            <person name="Zhou X."/>
            <person name="Zhu S.C."/>
            <person name="Zhu X."/>
            <person name="Smith H.O."/>
            <person name="Gibbs R.A."/>
            <person name="Myers E.W."/>
            <person name="Rubin G.M."/>
            <person name="Venter J.C."/>
        </authorList>
    </citation>
    <scope>NUCLEOTIDE SEQUENCE [LARGE SCALE GENOMIC DNA]</scope>
    <source>
        <strain evidence="3">Berkeley</strain>
    </source>
</reference>
<reference evidence="12 15" key="3">
    <citation type="journal article" date="2002" name="Genome Biol.">
        <title>Annotation of the Drosophila melanogaster euchromatic genome: a systematic review.</title>
        <authorList>
            <person name="Misra S."/>
            <person name="Crosby M.A."/>
            <person name="Mungall C.J."/>
            <person name="Matthews B.B."/>
            <person name="Campbell K.S."/>
            <person name="Hradecky P."/>
            <person name="Huang Y."/>
            <person name="Kaminker J.S."/>
            <person name="Millburn G.H."/>
            <person name="Prochnik S.E."/>
            <person name="Smith C.D."/>
            <person name="Tupy J.L."/>
            <person name="Whitfield E.J."/>
            <person name="Bayraktaroglu L."/>
            <person name="Berman B.P."/>
            <person name="Bettencourt B.R."/>
            <person name="Celniker S.E."/>
            <person name="de Grey A.D.N.J."/>
            <person name="Drysdale R.A."/>
            <person name="Harris N.L."/>
            <person name="Richter J."/>
            <person name="Russo S."/>
            <person name="Schroeder A.J."/>
            <person name="Shu S.Q."/>
            <person name="Stapleton M."/>
            <person name="Yamada C."/>
            <person name="Ashburner M."/>
            <person name="Gelbart W.M."/>
            <person name="Rubin G.M."/>
            <person name="Lewis S.E."/>
        </authorList>
    </citation>
    <scope>GENOME REANNOTATION</scope>
    <scope>ALTERNATIVE SPLICING</scope>
    <source>
        <strain>Berkeley</strain>
    </source>
</reference>
<reference evidence="12 13" key="4">
    <citation type="journal article" date="2002" name="Genome Biol.">
        <title>A Drosophila full-length cDNA resource.</title>
        <authorList>
            <person name="Stapleton M."/>
            <person name="Carlson J.W."/>
            <person name="Brokstein P."/>
            <person name="Yu C."/>
            <person name="Champe M."/>
            <person name="George R.A."/>
            <person name="Guarin H."/>
            <person name="Kronmiller B."/>
            <person name="Pacleb J.M."/>
            <person name="Park S."/>
            <person name="Wan K.H."/>
            <person name="Rubin G.M."/>
            <person name="Celniker S.E."/>
        </authorList>
    </citation>
    <scope>NUCLEOTIDE SEQUENCE [LARGE SCALE MRNA] (ISOFORM B)</scope>
    <source>
        <strain evidence="13">Berkeley</strain>
        <tissue evidence="5">Embryo</tissue>
    </source>
</reference>
<reference key="5">
    <citation type="journal article" date="2003" name="J. Neurogenet.">
        <title>Expression analysis of the lingerer gene in the larval central nervous system of Drosophila melanogaster.</title>
        <authorList>
            <person name="Kuniyoshi H."/>
            <person name="Usui-Aoki K."/>
            <person name="Juni N."/>
            <person name="Yamamoto D."/>
        </authorList>
    </citation>
    <scope>TISSUE SPECIFICITY</scope>
</reference>
<reference evidence="12" key="6">
    <citation type="journal article" date="2007" name="Mol. Biosyst.">
        <title>An integrated chemical, mass spectrometric and computational strategy for (quantitative) phosphoproteomics: application to Drosophila melanogaster Kc167 cells.</title>
        <authorList>
            <person name="Bodenmiller B."/>
            <person name="Mueller L.N."/>
            <person name="Pedrioli P.G.A."/>
            <person name="Pflieger D."/>
            <person name="Juenger M.A."/>
            <person name="Eng J.K."/>
            <person name="Aebersold R."/>
            <person name="Tao W.A."/>
        </authorList>
    </citation>
    <scope>PHOSPHORYLATION [LARGE SCALE ANALYSIS] AT SER-672; THR-673 AND SER-674</scope>
    <scope>IDENTIFICATION BY MASS SPECTROMETRY</scope>
</reference>
<reference key="7">
    <citation type="journal article" date="2008" name="J. Proteome Res.">
        <title>Phosphoproteome analysis of Drosophila melanogaster embryos.</title>
        <authorList>
            <person name="Zhai B."/>
            <person name="Villen J."/>
            <person name="Beausoleil S.A."/>
            <person name="Mintseris J."/>
            <person name="Gygi S.P."/>
        </authorList>
    </citation>
    <scope>PHOSPHORYLATION [LARGE SCALE ANALYSIS] AT TYR-321 AND SER-324</scope>
    <scope>IDENTIFICATION BY MASS SPECTROMETRY</scope>
    <source>
        <tissue>Embryo</tissue>
    </source>
</reference>
<protein>
    <recommendedName>
        <fullName>Protein lingerer</fullName>
    </recommendedName>
</protein>
<keyword id="KW-0025">Alternative splicing</keyword>
<keyword id="KW-0085">Behavior</keyword>
<keyword id="KW-0963">Cytoplasm</keyword>
<keyword id="KW-0597">Phosphoprotein</keyword>
<keyword id="KW-1185">Reference proteome</keyword>
<comment type="function">
    <text evidence="4">Acts in the nervous system to mediate the control of copulatory organs during courtship.</text>
</comment>
<comment type="subcellular location">
    <subcellularLocation>
        <location evidence="4">Cytoplasm</location>
    </subcellularLocation>
    <text evidence="4">Found in the cytoplasm of many neuronal and glial cells in the brain and ventral ganglion, and in imaginal disks.</text>
</comment>
<comment type="alternative products">
    <event type="alternative splicing"/>
    <isoform>
        <id>Q86S05-1</id>
        <name evidence="4">D</name>
        <name evidence="4">Lig-B</name>
        <name evidence="4">type2</name>
        <sequence type="displayed"/>
    </isoform>
    <isoform>
        <id>Q86S05-2</id>
        <name evidence="3">A</name>
        <name evidence="3">C</name>
        <sequence type="described" ref="VSP_052633"/>
    </isoform>
    <isoform>
        <id>Q86S05-3</id>
        <name evidence="4">B</name>
        <name evidence="4">Lig-A</name>
        <name evidence="4">type1</name>
        <name evidence="4">type3</name>
        <sequence type="described" ref="VSP_052634"/>
    </isoform>
</comment>
<comment type="tissue specificity">
    <text evidence="4 6">At stage 11, expression is restricted to the neuroblasts, predominant in the central nervous system (CNS), including the brain and ventral nerve cord, and in the PNS. Later embryonic expression is seen in the gonads. Late third instar larvae show expression in the CNS, imaginal disks (including genital, eye-antennal, leg, wing and haltere disks), and gonads. In the larval brain, it is expressed in all of the glial cells and in clusters of neurons that projected contralaterally. In the larval ventral ganglion, it is expressed in subperineurial glia, peripheral exit glia, and a number of interneurons, but not in motor neurons. Isoform B is abundantly expressed in males and females. Isoform D is male specific and expressed at low levels.</text>
</comment>
<comment type="developmental stage">
    <text evidence="4">Expressed both maternally and zygotically throughout development. Zygotic expression levels rise after embryonic stage 9.</text>
</comment>
<comment type="disruption phenotype">
    <text evidence="4">Male flies exhibit abnormal copulation. They fail to successfully withdraw their genitalia upon termination of copulation so end up 'stuck' to the female, tugging to separate. There is also a 'non-copulating' behavioral phenotype. There are no morphological defects in the male genitalia. Females can mate successfully but have reduced fertility. Complete loss of lig function results in lethality during early pupal stages.</text>
</comment>
<organism>
    <name type="scientific">Drosophila melanogaster</name>
    <name type="common">Fruit fly</name>
    <dbReference type="NCBI Taxonomy" id="7227"/>
    <lineage>
        <taxon>Eukaryota</taxon>
        <taxon>Metazoa</taxon>
        <taxon>Ecdysozoa</taxon>
        <taxon>Arthropoda</taxon>
        <taxon>Hexapoda</taxon>
        <taxon>Insecta</taxon>
        <taxon>Pterygota</taxon>
        <taxon>Neoptera</taxon>
        <taxon>Endopterygota</taxon>
        <taxon>Diptera</taxon>
        <taxon>Brachycera</taxon>
        <taxon>Muscomorpha</taxon>
        <taxon>Ephydroidea</taxon>
        <taxon>Drosophilidae</taxon>
        <taxon>Drosophila</taxon>
        <taxon>Sophophora</taxon>
    </lineage>
</organism>
<sequence length="1375" mass="139491">MSTQTRSGGGGGGGHARNQKKSNASNSGGGGTGHHDGVSHAAAAGKKGGQDASKTDKPEKAQPKATTEQLRIAQITNSTTEDPQINEKVLLLLTMTQRSEEEVCCALNECDYDLEAAANFLIEELPQGAFAKYEKKRKNKAANNTADGAAGDGDWADGNGNADRREKSRNRSSNRGGTRGSSDSRGWRGRETRENERNQRESREPWSGQNAGQDRGDDRANDNYRGQRNGGGRSGPGGGGRGGGFVSRSGRGGGRMGGRTGGPRGDRGSGGPGGAYGSGRGGNANEDHHEVELWDNTIAQNAEKQQQAHDDAWGDWNNEEYEGSLKDSKVFTTSNLATQSAANVVSGTGASVTAVPAAAGTEISAPPGLEHQLVQQGSHLEESSSSGPAAVTPPATLSGSATTPLLQYSAAVSNPPPQLQSQGTQSGAGTGASAAAGGGAGSTPSSFVSASPDTFSSAASAAATLVHQAQKQQQLQQQTTPIKPSATLSVEQSQYFNSLASQGVSPGSVPVQSAPAGYAQNPVAAYSQTSTSVGVSQYPNTYANVFASGTAAGAGTAEQSQQQPQIRRARVKLPPPSKIPASAVEMPGDNALNNIGYLDVQFGALDFGTDDGFEPLPEKVGSGFSIDGQQQQQQPDDYQSKSQQQQQVTLAAGLQSSQISDALNAAGYTSRSTSQQQQGVSSAVNATIDQLTKSDPYGQTGGSGNAYQNAYQSSGASKTASGFPTTAPGGYSSSTYANVQSSVANSYQQQGYGSYQPSSYQQQAGSGAQSGTGAVSGGGGTATQNIPVGGSSSQNSTSGNASSAYLTSGYSTPQSAYQSSQSVYGNTGLSNSSGFSGSASNASSQYANFSASAKLKDATTASSAAHYDSVSTSSGVSSNSGSTGNGGVVSGQTGANQAAVSNNNSVSGSSSVSNVTAGVASGNVAGVGGGVSQSGVSSGVGVPGGSASSVGVNVNNNSSSASSVGAATVAQTATGTTAAVLASLTNKNTSSSNSSGSGGSAATTTGNASGQGAGASTGGVGSSSGAGGAGSGGGSGSGLVPTNIQMVSQYIQTGLPYYQQPVYSYEELQMMQQRVPHVQGYYDLNYPPASLGAGRDNLGSVTYSAMNDGRFARTDNNSSPVGNVSSTMSQQAGSSAPMLNVPYAYFYGGNVMPGSFQYGTPAIYPQIPAANTASGQQFPKPSYSAGYGSTSYDTLSQTTQDYSKGGYSSSVNQQSKTQTVSNQSQAGTGSDLTSSMYGKGHVALNKVNSYEKQSFHSGTPPPFNMPNTQTAGGTSAQPYGMYLPMPAAGHHNMIHQPIHQVHSELPLQVVVGGGTESHVLIHGNVNGPQVTYHRIWQTEPVQCQNQLVAAHCNNFEPNIDCCVHDNNNDLSFFAD</sequence>
<name>LIG_DROME</name>